<sequence>MTTSSYFLLVALGLLLYVCQSSFGGEHVCWLDDPNHPEGICGPQVSDIVEIRCEEKEAEQGGANNARAYTGRTSSLMKRRGFLSLLKKRGKRDEGSLQRSGRGIVCECCKHHCTKEELTEYCH</sequence>
<evidence type="ECO:0000250" key="1">
    <source>
        <dbReference type="UniProtKB" id="A0A0B5ABD9"/>
    </source>
</evidence>
<evidence type="ECO:0000250" key="2">
    <source>
        <dbReference type="UniProtKB" id="A0A0B5AC95"/>
    </source>
</evidence>
<evidence type="ECO:0000255" key="3"/>
<evidence type="ECO:0000269" key="4">
    <source>
    </source>
</evidence>
<evidence type="ECO:0000303" key="5">
    <source>
    </source>
</evidence>
<evidence type="ECO:0000305" key="6"/>
<proteinExistence type="evidence at protein level"/>
<dbReference type="EMBL" id="GAIH01000104">
    <property type="protein sequence ID" value="JAI08985.1"/>
    <property type="molecule type" value="mRNA"/>
</dbReference>
<dbReference type="GO" id="GO:0005576">
    <property type="term" value="C:extracellular region"/>
    <property type="evidence" value="ECO:0007669"/>
    <property type="project" value="UniProtKB-SubCell"/>
</dbReference>
<dbReference type="GO" id="GO:0005179">
    <property type="term" value="F:hormone activity"/>
    <property type="evidence" value="ECO:0007669"/>
    <property type="project" value="UniProtKB-KW"/>
</dbReference>
<dbReference type="GO" id="GO:0090729">
    <property type="term" value="F:toxin activity"/>
    <property type="evidence" value="ECO:0007669"/>
    <property type="project" value="UniProtKB-KW"/>
</dbReference>
<dbReference type="GO" id="GO:0006006">
    <property type="term" value="P:glucose metabolic process"/>
    <property type="evidence" value="ECO:0007669"/>
    <property type="project" value="UniProtKB-KW"/>
</dbReference>
<dbReference type="Gene3D" id="1.10.100.10">
    <property type="entry name" value="Insulin-like"/>
    <property type="match status" value="1"/>
</dbReference>
<dbReference type="InterPro" id="IPR016179">
    <property type="entry name" value="Insulin-like"/>
</dbReference>
<dbReference type="InterPro" id="IPR036438">
    <property type="entry name" value="Insulin-like_sf"/>
</dbReference>
<dbReference type="InterPro" id="IPR016724">
    <property type="entry name" value="Insulin-rel_pep"/>
</dbReference>
<dbReference type="InterPro" id="IPR022353">
    <property type="entry name" value="Insulin_CS"/>
</dbReference>
<dbReference type="Pfam" id="PF00049">
    <property type="entry name" value="Insulin"/>
    <property type="match status" value="1"/>
</dbReference>
<dbReference type="PIRSF" id="PIRSF018431">
    <property type="entry name" value="Molluscan_insulin_rel_peptide"/>
    <property type="match status" value="1"/>
</dbReference>
<dbReference type="SUPFAM" id="SSF56994">
    <property type="entry name" value="Insulin-like"/>
    <property type="match status" value="1"/>
</dbReference>
<dbReference type="PROSITE" id="PS00262">
    <property type="entry name" value="INSULIN"/>
    <property type="match status" value="1"/>
</dbReference>
<protein>
    <recommendedName>
        <fullName evidence="5">Insulin-like peptide-1</fullName>
        <shortName evidence="5">ILP-1</shortName>
    </recommendedName>
    <component>
        <recommendedName>
            <fullName evidence="5">ILP-1 B chain</fullName>
        </recommendedName>
    </component>
    <component>
        <recommendedName>
            <fullName evidence="5">ILP-1 A chain</fullName>
        </recommendedName>
    </component>
</protein>
<feature type="signal peptide" evidence="3">
    <location>
        <begin position="1"/>
        <end position="24"/>
    </location>
</feature>
<feature type="peptide" id="PRO_5002525828" description="ILP-1 B chain" evidence="1">
    <location>
        <begin position="25"/>
        <end position="58"/>
    </location>
</feature>
<feature type="propeptide" id="PRO_0000439359" description="C peptide" evidence="1">
    <location>
        <begin position="59"/>
        <end position="102"/>
    </location>
</feature>
<feature type="peptide" id="PRO_0000439360" description="ILP-1 A chain" evidence="1 4">
    <location>
        <begin position="103"/>
        <end position="123"/>
    </location>
</feature>
<feature type="modified residue" description="4-hydroxyproline; partial" evidence="2">
    <location>
        <position position="34"/>
    </location>
</feature>
<feature type="modified residue" description="4-carboxyglutamate" evidence="4">
    <location>
        <position position="107"/>
    </location>
</feature>
<feature type="modified residue" description="4-carboxyglutamate; partial" evidence="2">
    <location>
        <position position="117"/>
    </location>
</feature>
<feature type="disulfide bond" evidence="6">
    <location>
        <begin position="29"/>
        <end position="106"/>
    </location>
</feature>
<feature type="disulfide bond" description="Interchain (between B and A chains)" evidence="2">
    <location>
        <begin position="41"/>
        <end position="109"/>
    </location>
</feature>
<feature type="disulfide bond" description="Interchain (between B and A chains)" evidence="2">
    <location>
        <begin position="53"/>
        <end position="122"/>
    </location>
</feature>
<feature type="disulfide bond" evidence="2">
    <location>
        <begin position="108"/>
        <end position="113"/>
    </location>
</feature>
<comment type="function">
    <text evidence="2">This venom insulin facilitates prey capture by rapidly inducing hypoglycemic shock. Intraperitoneal injection of this peptide into zebrafish lowers blood glucose with the same potency than human insulin. In vivo, when applied to water, this peptide reduces overall locomotor activity of zebrafish larvae, observed as a significant decrease in the percentage of time spent swimming and movement frequency.</text>
</comment>
<comment type="subunit">
    <text evidence="2">Heterodimer of A and B chains; disulfide-linked.</text>
</comment>
<comment type="subcellular location">
    <subcellularLocation>
        <location evidence="4">Secreted</location>
    </subcellularLocation>
</comment>
<comment type="tissue specificity">
    <text evidence="4">Expressed by the venom duct.</text>
</comment>
<comment type="similarity">
    <text evidence="6">Belongs to the insulin family.</text>
</comment>
<organism>
    <name type="scientific">Conus victoriae</name>
    <name type="common">Queen Victoria cone</name>
    <dbReference type="NCBI Taxonomy" id="319920"/>
    <lineage>
        <taxon>Eukaryota</taxon>
        <taxon>Metazoa</taxon>
        <taxon>Spiralia</taxon>
        <taxon>Lophotrochozoa</taxon>
        <taxon>Mollusca</taxon>
        <taxon>Gastropoda</taxon>
        <taxon>Caenogastropoda</taxon>
        <taxon>Neogastropoda</taxon>
        <taxon>Conoidea</taxon>
        <taxon>Conidae</taxon>
        <taxon>Conus</taxon>
        <taxon>Cylinder</taxon>
    </lineage>
</organism>
<keyword id="KW-0119">Carbohydrate metabolism</keyword>
<keyword id="KW-0165">Cleavage on pair of basic residues</keyword>
<keyword id="KW-0903">Direct protein sequencing</keyword>
<keyword id="KW-1015">Disulfide bond</keyword>
<keyword id="KW-0301">Gamma-carboxyglutamic acid</keyword>
<keyword id="KW-0313">Glucose metabolism</keyword>
<keyword id="KW-0372">Hormone</keyword>
<keyword id="KW-0379">Hydroxylation</keyword>
<keyword id="KW-0964">Secreted</keyword>
<keyword id="KW-0732">Signal</keyword>
<keyword id="KW-0800">Toxin</keyword>
<reference key="1">
    <citation type="journal article" date="2014" name="PLoS ONE">
        <title>Diversity of conotoxin gene superfamilies in the venomous snail, Conus victoriae.</title>
        <authorList>
            <person name="Robinson S.D."/>
            <person name="Safavi-Hemami H."/>
            <person name="McIntosh L.D."/>
            <person name="Purcell A.W."/>
            <person name="Norton R.S."/>
            <person name="Papenfuss A.T."/>
        </authorList>
    </citation>
    <scope>NUCLEOTIDE SEQUENCE [MRNA]</scope>
</reference>
<reference key="2">
    <citation type="journal article" date="2017" name="Gen. Comp. Endocrinol.">
        <title>Hormone-like peptides in the venoms of marine cone snails.</title>
        <authorList>
            <person name="Robinson S.D."/>
            <person name="Li Q."/>
            <person name="Bandyopadhyay P.K."/>
            <person name="Gajewiak J."/>
            <person name="Yandell M."/>
            <person name="Papenfuss A.T."/>
            <person name="Purcell A.W."/>
            <person name="Norton R.S."/>
            <person name="Safavi-Hemami H."/>
        </authorList>
    </citation>
    <scope>NUCLEOTIDE SEQUENCE [MRNA]</scope>
    <scope>PROTEIN SEQUENCE OF 103-110</scope>
    <scope>GAMMA-CARBOXYGLUTAMATION AT GLU-107</scope>
    <scope>IDENTIFICATION BY MASS SPECTROMETRY</scope>
    <source>
        <tissue>Venom</tissue>
        <tissue>Venom gland</tissue>
    </source>
</reference>
<accession>A0A0F7YYV0</accession>
<name>INS_CONVC</name>